<sequence length="343" mass="37017">MTITPQEALQRTIEHREIFHDEMLHLMRLIMRGDMSPVMAAAIITGLRVKKETIGEIAAAATVMREFARRVEVEDNANFVDIVGTGGDGSHTFNISTATMFVAAAAGAKVAKHGNRGVSSKSGSADVLEALGVNIDLQPEQVAASIAETGMGFMFAPNHHPAMRNIAPVRRELGVRTIFNILGPLTNPADAPNQLMGVFHPDLVGIQVRVMQRLGAQHVLVVYGKDGMDEVSLGAATLVGELRDGEVREYEIHPEDFGMQMVSNRTLKVESADESRVMLLEALGNKPGVAREIVTLNAGTALYSADVAGSIADGIQLARDAIASGRAREKVDELVRFTQQFKR</sequence>
<protein>
    <recommendedName>
        <fullName evidence="1">Anthranilate phosphoribosyltransferase</fullName>
        <ecNumber evidence="1">2.4.2.18</ecNumber>
    </recommendedName>
</protein>
<reference key="1">
    <citation type="journal article" date="2010" name="Genome Biol. Evol.">
        <title>Continuing evolution of Burkholderia mallei through genome reduction and large-scale rearrangements.</title>
        <authorList>
            <person name="Losada L."/>
            <person name="Ronning C.M."/>
            <person name="DeShazer D."/>
            <person name="Woods D."/>
            <person name="Fedorova N."/>
            <person name="Kim H.S."/>
            <person name="Shabalina S.A."/>
            <person name="Pearson T.R."/>
            <person name="Brinkac L."/>
            <person name="Tan P."/>
            <person name="Nandi T."/>
            <person name="Crabtree J."/>
            <person name="Badger J."/>
            <person name="Beckstrom-Sternberg S."/>
            <person name="Saqib M."/>
            <person name="Schutzer S.E."/>
            <person name="Keim P."/>
            <person name="Nierman W.C."/>
        </authorList>
    </citation>
    <scope>NUCLEOTIDE SEQUENCE [LARGE SCALE GENOMIC DNA]</scope>
    <source>
        <strain>NCTC 10247</strain>
    </source>
</reference>
<proteinExistence type="inferred from homology"/>
<feature type="chain" id="PRO_1000042996" description="Anthranilate phosphoribosyltransferase">
    <location>
        <begin position="1"/>
        <end position="343"/>
    </location>
</feature>
<feature type="binding site" evidence="1">
    <location>
        <position position="84"/>
    </location>
    <ligand>
        <name>5-phospho-alpha-D-ribose 1-diphosphate</name>
        <dbReference type="ChEBI" id="CHEBI:58017"/>
    </ligand>
</feature>
<feature type="binding site" evidence="1">
    <location>
        <position position="84"/>
    </location>
    <ligand>
        <name>anthranilate</name>
        <dbReference type="ChEBI" id="CHEBI:16567"/>
        <label>1</label>
    </ligand>
</feature>
<feature type="binding site" evidence="1">
    <location>
        <begin position="87"/>
        <end position="88"/>
    </location>
    <ligand>
        <name>5-phospho-alpha-D-ribose 1-diphosphate</name>
        <dbReference type="ChEBI" id="CHEBI:58017"/>
    </ligand>
</feature>
<feature type="binding site" evidence="1">
    <location>
        <position position="92"/>
    </location>
    <ligand>
        <name>5-phospho-alpha-D-ribose 1-diphosphate</name>
        <dbReference type="ChEBI" id="CHEBI:58017"/>
    </ligand>
</feature>
<feature type="binding site" evidence="1">
    <location>
        <begin position="94"/>
        <end position="97"/>
    </location>
    <ligand>
        <name>5-phospho-alpha-D-ribose 1-diphosphate</name>
        <dbReference type="ChEBI" id="CHEBI:58017"/>
    </ligand>
</feature>
<feature type="binding site" evidence="1">
    <location>
        <position position="96"/>
    </location>
    <ligand>
        <name>Mg(2+)</name>
        <dbReference type="ChEBI" id="CHEBI:18420"/>
        <label>1</label>
    </ligand>
</feature>
<feature type="binding site" evidence="1">
    <location>
        <begin position="112"/>
        <end position="120"/>
    </location>
    <ligand>
        <name>5-phospho-alpha-D-ribose 1-diphosphate</name>
        <dbReference type="ChEBI" id="CHEBI:58017"/>
    </ligand>
</feature>
<feature type="binding site" evidence="1">
    <location>
        <position position="115"/>
    </location>
    <ligand>
        <name>anthranilate</name>
        <dbReference type="ChEBI" id="CHEBI:16567"/>
        <label>1</label>
    </ligand>
</feature>
<feature type="binding site" evidence="1">
    <location>
        <position position="124"/>
    </location>
    <ligand>
        <name>5-phospho-alpha-D-ribose 1-diphosphate</name>
        <dbReference type="ChEBI" id="CHEBI:58017"/>
    </ligand>
</feature>
<feature type="binding site" evidence="1">
    <location>
        <position position="170"/>
    </location>
    <ligand>
        <name>anthranilate</name>
        <dbReference type="ChEBI" id="CHEBI:16567"/>
        <label>2</label>
    </ligand>
</feature>
<feature type="binding site" evidence="1">
    <location>
        <position position="229"/>
    </location>
    <ligand>
        <name>Mg(2+)</name>
        <dbReference type="ChEBI" id="CHEBI:18420"/>
        <label>2</label>
    </ligand>
</feature>
<feature type="binding site" evidence="1">
    <location>
        <position position="230"/>
    </location>
    <ligand>
        <name>Mg(2+)</name>
        <dbReference type="ChEBI" id="CHEBI:18420"/>
        <label>1</label>
    </ligand>
</feature>
<feature type="binding site" evidence="1">
    <location>
        <position position="230"/>
    </location>
    <ligand>
        <name>Mg(2+)</name>
        <dbReference type="ChEBI" id="CHEBI:18420"/>
        <label>2</label>
    </ligand>
</feature>
<organism>
    <name type="scientific">Burkholderia mallei (strain NCTC 10247)</name>
    <dbReference type="NCBI Taxonomy" id="320389"/>
    <lineage>
        <taxon>Bacteria</taxon>
        <taxon>Pseudomonadati</taxon>
        <taxon>Pseudomonadota</taxon>
        <taxon>Betaproteobacteria</taxon>
        <taxon>Burkholderiales</taxon>
        <taxon>Burkholderiaceae</taxon>
        <taxon>Burkholderia</taxon>
        <taxon>pseudomallei group</taxon>
    </lineage>
</organism>
<dbReference type="EC" id="2.4.2.18" evidence="1"/>
<dbReference type="EMBL" id="CP000547">
    <property type="protein sequence ID" value="ABO02172.1"/>
    <property type="molecule type" value="Genomic_DNA"/>
</dbReference>
<dbReference type="RefSeq" id="WP_004186823.1">
    <property type="nucleotide sequence ID" value="NZ_CP007801.1"/>
</dbReference>
<dbReference type="SMR" id="A3MFQ3"/>
<dbReference type="GeneID" id="93061660"/>
<dbReference type="KEGG" id="bmaz:BM44_4072"/>
<dbReference type="KEGG" id="bmn:BMA10247_A1912"/>
<dbReference type="PATRIC" id="fig|320389.8.peg.4632"/>
<dbReference type="UniPathway" id="UPA00035">
    <property type="reaction ID" value="UER00041"/>
</dbReference>
<dbReference type="GO" id="GO:0005829">
    <property type="term" value="C:cytosol"/>
    <property type="evidence" value="ECO:0007669"/>
    <property type="project" value="TreeGrafter"/>
</dbReference>
<dbReference type="GO" id="GO:0004048">
    <property type="term" value="F:anthranilate phosphoribosyltransferase activity"/>
    <property type="evidence" value="ECO:0007669"/>
    <property type="project" value="UniProtKB-UniRule"/>
</dbReference>
<dbReference type="GO" id="GO:0000287">
    <property type="term" value="F:magnesium ion binding"/>
    <property type="evidence" value="ECO:0007669"/>
    <property type="project" value="UniProtKB-UniRule"/>
</dbReference>
<dbReference type="GO" id="GO:0000162">
    <property type="term" value="P:L-tryptophan biosynthetic process"/>
    <property type="evidence" value="ECO:0007669"/>
    <property type="project" value="UniProtKB-UniRule"/>
</dbReference>
<dbReference type="FunFam" id="1.20.970.10:FF:000006">
    <property type="entry name" value="Anthranilate phosphoribosyltransferase"/>
    <property type="match status" value="1"/>
</dbReference>
<dbReference type="FunFam" id="3.40.1030.10:FF:000002">
    <property type="entry name" value="Anthranilate phosphoribosyltransferase"/>
    <property type="match status" value="1"/>
</dbReference>
<dbReference type="Gene3D" id="3.40.1030.10">
    <property type="entry name" value="Nucleoside phosphorylase/phosphoribosyltransferase catalytic domain"/>
    <property type="match status" value="1"/>
</dbReference>
<dbReference type="Gene3D" id="1.20.970.10">
    <property type="entry name" value="Transferase, Pyrimidine Nucleoside Phosphorylase, Chain C"/>
    <property type="match status" value="1"/>
</dbReference>
<dbReference type="HAMAP" id="MF_00211">
    <property type="entry name" value="TrpD"/>
    <property type="match status" value="1"/>
</dbReference>
<dbReference type="InterPro" id="IPR005940">
    <property type="entry name" value="Anthranilate_Pribosyl_Tfrase"/>
</dbReference>
<dbReference type="InterPro" id="IPR000312">
    <property type="entry name" value="Glycosyl_Trfase_fam3"/>
</dbReference>
<dbReference type="InterPro" id="IPR017459">
    <property type="entry name" value="Glycosyl_Trfase_fam3_N_dom"/>
</dbReference>
<dbReference type="InterPro" id="IPR036320">
    <property type="entry name" value="Glycosyl_Trfase_fam3_N_dom_sf"/>
</dbReference>
<dbReference type="InterPro" id="IPR035902">
    <property type="entry name" value="Nuc_phospho_transferase"/>
</dbReference>
<dbReference type="NCBIfam" id="TIGR01245">
    <property type="entry name" value="trpD"/>
    <property type="match status" value="1"/>
</dbReference>
<dbReference type="PANTHER" id="PTHR43285">
    <property type="entry name" value="ANTHRANILATE PHOSPHORIBOSYLTRANSFERASE"/>
    <property type="match status" value="1"/>
</dbReference>
<dbReference type="PANTHER" id="PTHR43285:SF2">
    <property type="entry name" value="ANTHRANILATE PHOSPHORIBOSYLTRANSFERASE"/>
    <property type="match status" value="1"/>
</dbReference>
<dbReference type="Pfam" id="PF02885">
    <property type="entry name" value="Glycos_trans_3N"/>
    <property type="match status" value="1"/>
</dbReference>
<dbReference type="Pfam" id="PF00591">
    <property type="entry name" value="Glycos_transf_3"/>
    <property type="match status" value="1"/>
</dbReference>
<dbReference type="SUPFAM" id="SSF52418">
    <property type="entry name" value="Nucleoside phosphorylase/phosphoribosyltransferase catalytic domain"/>
    <property type="match status" value="1"/>
</dbReference>
<dbReference type="SUPFAM" id="SSF47648">
    <property type="entry name" value="Nucleoside phosphorylase/phosphoribosyltransferase N-terminal domain"/>
    <property type="match status" value="1"/>
</dbReference>
<evidence type="ECO:0000255" key="1">
    <source>
        <dbReference type="HAMAP-Rule" id="MF_00211"/>
    </source>
</evidence>
<comment type="function">
    <text evidence="1">Catalyzes the transfer of the phosphoribosyl group of 5-phosphorylribose-1-pyrophosphate (PRPP) to anthranilate to yield N-(5'-phosphoribosyl)-anthranilate (PRA).</text>
</comment>
<comment type="catalytic activity">
    <reaction evidence="1">
        <text>N-(5-phospho-beta-D-ribosyl)anthranilate + diphosphate = 5-phospho-alpha-D-ribose 1-diphosphate + anthranilate</text>
        <dbReference type="Rhea" id="RHEA:11768"/>
        <dbReference type="ChEBI" id="CHEBI:16567"/>
        <dbReference type="ChEBI" id="CHEBI:18277"/>
        <dbReference type="ChEBI" id="CHEBI:33019"/>
        <dbReference type="ChEBI" id="CHEBI:58017"/>
        <dbReference type="EC" id="2.4.2.18"/>
    </reaction>
</comment>
<comment type="cofactor">
    <cofactor evidence="1">
        <name>Mg(2+)</name>
        <dbReference type="ChEBI" id="CHEBI:18420"/>
    </cofactor>
    <text evidence="1">Binds 2 magnesium ions per monomer.</text>
</comment>
<comment type="pathway">
    <text evidence="1">Amino-acid biosynthesis; L-tryptophan biosynthesis; L-tryptophan from chorismate: step 2/5.</text>
</comment>
<comment type="subunit">
    <text evidence="1">Homodimer.</text>
</comment>
<comment type="similarity">
    <text evidence="1">Belongs to the anthranilate phosphoribosyltransferase family.</text>
</comment>
<name>TRPD_BURM7</name>
<accession>A3MFQ3</accession>
<gene>
    <name evidence="1" type="primary">trpD</name>
    <name type="ordered locus">BMA10247_A1912</name>
</gene>
<keyword id="KW-0028">Amino-acid biosynthesis</keyword>
<keyword id="KW-0057">Aromatic amino acid biosynthesis</keyword>
<keyword id="KW-0328">Glycosyltransferase</keyword>
<keyword id="KW-0460">Magnesium</keyword>
<keyword id="KW-0479">Metal-binding</keyword>
<keyword id="KW-0808">Transferase</keyword>
<keyword id="KW-0822">Tryptophan biosynthesis</keyword>